<accession>O35375</accession>
<accession>B1AT44</accession>
<accession>O35373</accession>
<accession>O35374</accession>
<accession>O35376</accession>
<accession>O35377</accession>
<accession>O35378</accession>
<gene>
    <name type="primary">Nrp2</name>
</gene>
<name>NRP2_MOUSE</name>
<dbReference type="EMBL" id="AF022856">
    <property type="protein sequence ID" value="AAC53379.1"/>
    <property type="molecule type" value="mRNA"/>
</dbReference>
<dbReference type="EMBL" id="AF022854">
    <property type="protein sequence ID" value="AAC53377.1"/>
    <property type="molecule type" value="mRNA"/>
</dbReference>
<dbReference type="EMBL" id="AF022855">
    <property type="protein sequence ID" value="AAC53378.1"/>
    <property type="molecule type" value="mRNA"/>
</dbReference>
<dbReference type="EMBL" id="AF022857">
    <property type="protein sequence ID" value="AAC53380.1"/>
    <property type="molecule type" value="mRNA"/>
</dbReference>
<dbReference type="EMBL" id="AF022858">
    <property type="protein sequence ID" value="AAC53381.1"/>
    <property type="molecule type" value="mRNA"/>
</dbReference>
<dbReference type="EMBL" id="AF022861">
    <property type="protein sequence ID" value="AAC53382.1"/>
    <property type="molecule type" value="mRNA"/>
</dbReference>
<dbReference type="EMBL" id="AL645727">
    <property type="status" value="NOT_ANNOTATED_CDS"/>
    <property type="molecule type" value="Genomic_DNA"/>
</dbReference>
<dbReference type="EMBL" id="AL671560">
    <property type="status" value="NOT_ANNOTATED_CDS"/>
    <property type="molecule type" value="Genomic_DNA"/>
</dbReference>
<dbReference type="CCDS" id="CCDS14995.1">
    <molecule id="O35375-3"/>
</dbReference>
<dbReference type="CCDS" id="CCDS35589.1">
    <molecule id="O35375-1"/>
</dbReference>
<dbReference type="CCDS" id="CCDS35590.1">
    <molecule id="O35375-4"/>
</dbReference>
<dbReference type="CCDS" id="CCDS35591.1">
    <molecule id="O35375-2"/>
</dbReference>
<dbReference type="CCDS" id="CCDS35592.1">
    <molecule id="O35375-6"/>
</dbReference>
<dbReference type="CCDS" id="CCDS35593.1">
    <molecule id="O35375-5"/>
</dbReference>
<dbReference type="RefSeq" id="NP_001070871.1">
    <molecule id="O35375-1"/>
    <property type="nucleotide sequence ID" value="NM_001077403.1"/>
</dbReference>
<dbReference type="RefSeq" id="NP_001070872.1">
    <molecule id="O35375-4"/>
    <property type="nucleotide sequence ID" value="NM_001077404.1"/>
</dbReference>
<dbReference type="RefSeq" id="NP_001070873.1">
    <molecule id="O35375-2"/>
    <property type="nucleotide sequence ID" value="NM_001077405.1"/>
</dbReference>
<dbReference type="RefSeq" id="NP_001070874.1">
    <molecule id="O35375-6"/>
    <property type="nucleotide sequence ID" value="NM_001077406.1"/>
</dbReference>
<dbReference type="RefSeq" id="NP_001070875.1">
    <molecule id="O35375-5"/>
    <property type="nucleotide sequence ID" value="NM_001077407.1"/>
</dbReference>
<dbReference type="RefSeq" id="NP_035069.2">
    <molecule id="O35375-3"/>
    <property type="nucleotide sequence ID" value="NM_010939.2"/>
</dbReference>
<dbReference type="SMR" id="O35375"/>
<dbReference type="BioGRID" id="201849">
    <property type="interactions" value="13"/>
</dbReference>
<dbReference type="FunCoup" id="O35375">
    <property type="interactions" value="556"/>
</dbReference>
<dbReference type="STRING" id="10090.ENSMUSP00000109794"/>
<dbReference type="GlyCosmos" id="O35375">
    <property type="glycosylation" value="4 sites, No reported glycans"/>
</dbReference>
<dbReference type="GlyGen" id="O35375">
    <property type="glycosylation" value="4 sites, 1 N-linked glycan (2 sites)"/>
</dbReference>
<dbReference type="iPTMnet" id="O35375"/>
<dbReference type="PhosphoSitePlus" id="O35375"/>
<dbReference type="SwissPalm" id="O35375"/>
<dbReference type="CPTAC" id="non-CPTAC-3486"/>
<dbReference type="jPOST" id="O35375"/>
<dbReference type="PaxDb" id="10090-ENSMUSP00000109794"/>
<dbReference type="PeptideAtlas" id="O35375"/>
<dbReference type="ProteomicsDB" id="293740">
    <molecule id="O35375-1"/>
</dbReference>
<dbReference type="ProteomicsDB" id="293741">
    <molecule id="O35375-2"/>
</dbReference>
<dbReference type="ProteomicsDB" id="293742">
    <molecule id="O35375-3"/>
</dbReference>
<dbReference type="ProteomicsDB" id="293743">
    <molecule id="O35375-4"/>
</dbReference>
<dbReference type="ProteomicsDB" id="293744">
    <molecule id="O35375-5"/>
</dbReference>
<dbReference type="ProteomicsDB" id="293745">
    <molecule id="O35375-6"/>
</dbReference>
<dbReference type="Pumba" id="O35375"/>
<dbReference type="ABCD" id="O35375">
    <property type="antibodies" value="5 sequenced antibodies"/>
</dbReference>
<dbReference type="Antibodypedia" id="34173">
    <property type="antibodies" value="451 antibodies from 35 providers"/>
</dbReference>
<dbReference type="DNASU" id="18187"/>
<dbReference type="Ensembl" id="ENSMUST00000027112.13">
    <molecule id="O35375-6"/>
    <property type="protein sequence ID" value="ENSMUSP00000027112.7"/>
    <property type="gene ID" value="ENSMUSG00000025969.16"/>
</dbReference>
<dbReference type="Ensembl" id="ENSMUST00000063594.13">
    <molecule id="O35375-4"/>
    <property type="protein sequence ID" value="ENSMUSP00000069379.7"/>
    <property type="gene ID" value="ENSMUSG00000025969.16"/>
</dbReference>
<dbReference type="Ensembl" id="ENSMUST00000075144.12">
    <molecule id="O35375-3"/>
    <property type="protein sequence ID" value="ENSMUSP00000074642.6"/>
    <property type="gene ID" value="ENSMUSG00000025969.16"/>
</dbReference>
<dbReference type="Ensembl" id="ENSMUST00000102822.9">
    <molecule id="O35375-2"/>
    <property type="protein sequence ID" value="ENSMUSP00000099886.3"/>
    <property type="gene ID" value="ENSMUSG00000025969.16"/>
</dbReference>
<dbReference type="Ensembl" id="ENSMUST00000114155.8">
    <molecule id="O35375-5"/>
    <property type="protein sequence ID" value="ENSMUSP00000109792.2"/>
    <property type="gene ID" value="ENSMUSG00000025969.16"/>
</dbReference>
<dbReference type="Ensembl" id="ENSMUST00000114157.3">
    <molecule id="O35375-1"/>
    <property type="protein sequence ID" value="ENSMUSP00000109794.3"/>
    <property type="gene ID" value="ENSMUSG00000025969.16"/>
</dbReference>
<dbReference type="GeneID" id="18187"/>
<dbReference type="KEGG" id="mmu:18187"/>
<dbReference type="UCSC" id="uc007bfj.1">
    <molecule id="O35375-6"/>
    <property type="organism name" value="mouse"/>
</dbReference>
<dbReference type="UCSC" id="uc007bfl.1">
    <molecule id="O35375-1"/>
    <property type="organism name" value="mouse"/>
</dbReference>
<dbReference type="UCSC" id="uc007bfn.1">
    <molecule id="O35375-3"/>
    <property type="organism name" value="mouse"/>
</dbReference>
<dbReference type="UCSC" id="uc007bfo.1">
    <molecule id="O35375-2"/>
    <property type="organism name" value="mouse"/>
</dbReference>
<dbReference type="AGR" id="MGI:1100492"/>
<dbReference type="CTD" id="8828"/>
<dbReference type="MGI" id="MGI:1100492">
    <property type="gene designation" value="Nrp2"/>
</dbReference>
<dbReference type="VEuPathDB" id="HostDB:ENSMUSG00000025969"/>
<dbReference type="eggNOG" id="ENOG502QVB7">
    <property type="taxonomic scope" value="Eukaryota"/>
</dbReference>
<dbReference type="GeneTree" id="ENSGT00940000155270"/>
<dbReference type="HOGENOM" id="CLU_015228_6_1_1"/>
<dbReference type="InParanoid" id="O35375"/>
<dbReference type="OMA" id="XYDFIEI"/>
<dbReference type="OrthoDB" id="6155811at2759"/>
<dbReference type="PhylomeDB" id="O35375"/>
<dbReference type="TreeFam" id="TF316506"/>
<dbReference type="Reactome" id="R-MMU-194306">
    <property type="pathway name" value="Neurophilin interactions with VEGF and VEGFR"/>
</dbReference>
<dbReference type="BioGRID-ORCS" id="18187">
    <property type="hits" value="2 hits in 77 CRISPR screens"/>
</dbReference>
<dbReference type="ChiTaRS" id="Nrp2">
    <property type="organism name" value="mouse"/>
</dbReference>
<dbReference type="PRO" id="PR:O35375"/>
<dbReference type="Proteomes" id="UP000000589">
    <property type="component" value="Chromosome 1"/>
</dbReference>
<dbReference type="RNAct" id="O35375">
    <property type="molecule type" value="protein"/>
</dbReference>
<dbReference type="Bgee" id="ENSMUSG00000025969">
    <property type="expression patterns" value="Expressed in vault of skull and 270 other cell types or tissues"/>
</dbReference>
<dbReference type="ExpressionAtlas" id="O35375">
    <property type="expression patterns" value="baseline and differential"/>
</dbReference>
<dbReference type="GO" id="GO:0030424">
    <property type="term" value="C:axon"/>
    <property type="evidence" value="ECO:0000314"/>
    <property type="project" value="MGI"/>
</dbReference>
<dbReference type="GO" id="GO:0098978">
    <property type="term" value="C:glutamatergic synapse"/>
    <property type="evidence" value="ECO:0000314"/>
    <property type="project" value="SynGO"/>
</dbReference>
<dbReference type="GO" id="GO:0005886">
    <property type="term" value="C:plasma membrane"/>
    <property type="evidence" value="ECO:0000304"/>
    <property type="project" value="Reactome"/>
</dbReference>
<dbReference type="GO" id="GO:0045211">
    <property type="term" value="C:postsynaptic membrane"/>
    <property type="evidence" value="ECO:0000314"/>
    <property type="project" value="SynGO"/>
</dbReference>
<dbReference type="GO" id="GO:0008201">
    <property type="term" value="F:heparin binding"/>
    <property type="evidence" value="ECO:0007669"/>
    <property type="project" value="UniProtKB-KW"/>
</dbReference>
<dbReference type="GO" id="GO:0046872">
    <property type="term" value="F:metal ion binding"/>
    <property type="evidence" value="ECO:0007669"/>
    <property type="project" value="UniProtKB-KW"/>
</dbReference>
<dbReference type="GO" id="GO:0017154">
    <property type="term" value="F:semaphorin receptor activity"/>
    <property type="evidence" value="ECO:0000314"/>
    <property type="project" value="MGI"/>
</dbReference>
<dbReference type="GO" id="GO:0005021">
    <property type="term" value="F:vascular endothelial growth factor receptor activity"/>
    <property type="evidence" value="ECO:0007669"/>
    <property type="project" value="InterPro"/>
</dbReference>
<dbReference type="GO" id="GO:0001525">
    <property type="term" value="P:angiogenesis"/>
    <property type="evidence" value="ECO:0007669"/>
    <property type="project" value="InterPro"/>
</dbReference>
<dbReference type="GO" id="GO:0048846">
    <property type="term" value="P:axon extension involved in axon guidance"/>
    <property type="evidence" value="ECO:0000315"/>
    <property type="project" value="BHF-UCL"/>
</dbReference>
<dbReference type="GO" id="GO:0007411">
    <property type="term" value="P:axon guidance"/>
    <property type="evidence" value="ECO:0000315"/>
    <property type="project" value="MGI"/>
</dbReference>
<dbReference type="GO" id="GO:1990830">
    <property type="term" value="P:cellular response to leukemia inhibitory factor"/>
    <property type="evidence" value="ECO:0000270"/>
    <property type="project" value="MGI"/>
</dbReference>
<dbReference type="GO" id="GO:1904835">
    <property type="term" value="P:dorsal root ganglion morphogenesis"/>
    <property type="evidence" value="ECO:0000315"/>
    <property type="project" value="ParkinsonsUK-UCL"/>
</dbReference>
<dbReference type="GO" id="GO:0021612">
    <property type="term" value="P:facial nerve structural organization"/>
    <property type="evidence" value="ECO:0000315"/>
    <property type="project" value="ParkinsonsUK-UCL"/>
</dbReference>
<dbReference type="GO" id="GO:1903375">
    <property type="term" value="P:facioacoustic ganglion development"/>
    <property type="evidence" value="ECO:0000315"/>
    <property type="project" value="ParkinsonsUK-UCL"/>
</dbReference>
<dbReference type="GO" id="GO:0021828">
    <property type="term" value="P:gonadotrophin-releasing hormone neuronal migration to the hypothalamus"/>
    <property type="evidence" value="ECO:0000315"/>
    <property type="project" value="BHF-UCL"/>
</dbReference>
<dbReference type="GO" id="GO:0007507">
    <property type="term" value="P:heart development"/>
    <property type="evidence" value="ECO:0000316"/>
    <property type="project" value="MGI"/>
</dbReference>
<dbReference type="GO" id="GO:0050919">
    <property type="term" value="P:negative chemotaxis"/>
    <property type="evidence" value="ECO:0000315"/>
    <property type="project" value="MGI"/>
</dbReference>
<dbReference type="GO" id="GO:0021675">
    <property type="term" value="P:nerve development"/>
    <property type="evidence" value="ECO:0000315"/>
    <property type="project" value="BHF-UCL"/>
</dbReference>
<dbReference type="GO" id="GO:1901166">
    <property type="term" value="P:neural crest cell migration involved in autonomic nervous system development"/>
    <property type="evidence" value="ECO:0000315"/>
    <property type="project" value="ParkinsonsUK-UCL"/>
</dbReference>
<dbReference type="GO" id="GO:0001764">
    <property type="term" value="P:neuron migration"/>
    <property type="evidence" value="ECO:0000315"/>
    <property type="project" value="BHF-UCL"/>
</dbReference>
<dbReference type="GO" id="GO:0003148">
    <property type="term" value="P:outflow tract septum morphogenesis"/>
    <property type="evidence" value="ECO:0000316"/>
    <property type="project" value="BHF-UCL"/>
</dbReference>
<dbReference type="GO" id="GO:0099175">
    <property type="term" value="P:regulation of postsynapse organization"/>
    <property type="evidence" value="ECO:0000314"/>
    <property type="project" value="SynGO"/>
</dbReference>
<dbReference type="GO" id="GO:0071526">
    <property type="term" value="P:semaphorin-plexin signaling pathway"/>
    <property type="evidence" value="ECO:0000315"/>
    <property type="project" value="BHF-UCL"/>
</dbReference>
<dbReference type="GO" id="GO:0097374">
    <property type="term" value="P:sensory neuron axon guidance"/>
    <property type="evidence" value="ECO:0000315"/>
    <property type="project" value="ParkinsonsUK-UCL"/>
</dbReference>
<dbReference type="GO" id="GO:0061549">
    <property type="term" value="P:sympathetic ganglion development"/>
    <property type="evidence" value="ECO:0000315"/>
    <property type="project" value="BHF-UCL"/>
</dbReference>
<dbReference type="GO" id="GO:0097490">
    <property type="term" value="P:sympathetic neuron projection extension"/>
    <property type="evidence" value="ECO:0000315"/>
    <property type="project" value="BHF-UCL"/>
</dbReference>
<dbReference type="GO" id="GO:0097491">
    <property type="term" value="P:sympathetic neuron projection guidance"/>
    <property type="evidence" value="ECO:0000315"/>
    <property type="project" value="BHF-UCL"/>
</dbReference>
<dbReference type="GO" id="GO:0061551">
    <property type="term" value="P:trigeminal ganglion development"/>
    <property type="evidence" value="ECO:0000315"/>
    <property type="project" value="ParkinsonsUK-UCL"/>
</dbReference>
<dbReference type="GO" id="GO:0036484">
    <property type="term" value="P:trunk neural crest cell migration"/>
    <property type="evidence" value="ECO:0000315"/>
    <property type="project" value="MGI"/>
</dbReference>
<dbReference type="GO" id="GO:0036486">
    <property type="term" value="P:ventral trunk neural crest cell migration"/>
    <property type="evidence" value="ECO:0000315"/>
    <property type="project" value="ParkinsonsUK-UCL"/>
</dbReference>
<dbReference type="GO" id="GO:0021649">
    <property type="term" value="P:vestibulocochlear nerve structural organization"/>
    <property type="evidence" value="ECO:0000315"/>
    <property type="project" value="ParkinsonsUK-UCL"/>
</dbReference>
<dbReference type="CDD" id="cd00041">
    <property type="entry name" value="CUB"/>
    <property type="match status" value="2"/>
</dbReference>
<dbReference type="CDD" id="cd00057">
    <property type="entry name" value="FA58C"/>
    <property type="match status" value="2"/>
</dbReference>
<dbReference type="CDD" id="cd06263">
    <property type="entry name" value="MAM"/>
    <property type="match status" value="1"/>
</dbReference>
<dbReference type="FunFam" id="2.60.120.260:FF:000002">
    <property type="entry name" value="Coagulation factor VIII"/>
    <property type="match status" value="1"/>
</dbReference>
<dbReference type="FunFam" id="2.60.120.200:FF:000042">
    <property type="entry name" value="Neuropilin"/>
    <property type="match status" value="1"/>
</dbReference>
<dbReference type="FunFam" id="2.60.120.260:FF:000013">
    <property type="entry name" value="Neuropilin"/>
    <property type="match status" value="1"/>
</dbReference>
<dbReference type="FunFam" id="2.60.120.290:FF:000003">
    <property type="entry name" value="Neuropilin"/>
    <property type="match status" value="1"/>
</dbReference>
<dbReference type="FunFam" id="2.60.120.290:FF:000010">
    <property type="entry name" value="Neuropilin"/>
    <property type="match status" value="1"/>
</dbReference>
<dbReference type="Gene3D" id="2.60.120.200">
    <property type="match status" value="1"/>
</dbReference>
<dbReference type="Gene3D" id="2.60.120.260">
    <property type="entry name" value="Galactose-binding domain-like"/>
    <property type="match status" value="2"/>
</dbReference>
<dbReference type="Gene3D" id="2.60.120.290">
    <property type="entry name" value="Spermadhesin, CUB domain"/>
    <property type="match status" value="2"/>
</dbReference>
<dbReference type="InterPro" id="IPR013320">
    <property type="entry name" value="ConA-like_dom_sf"/>
</dbReference>
<dbReference type="InterPro" id="IPR000859">
    <property type="entry name" value="CUB_dom"/>
</dbReference>
<dbReference type="InterPro" id="IPR000421">
    <property type="entry name" value="FA58C"/>
</dbReference>
<dbReference type="InterPro" id="IPR008979">
    <property type="entry name" value="Galactose-bd-like_sf"/>
</dbReference>
<dbReference type="InterPro" id="IPR000998">
    <property type="entry name" value="MAM_dom"/>
</dbReference>
<dbReference type="InterPro" id="IPR014648">
    <property type="entry name" value="Neuropilin"/>
</dbReference>
<dbReference type="InterPro" id="IPR022579">
    <property type="entry name" value="Neuropilin_C"/>
</dbReference>
<dbReference type="InterPro" id="IPR050633">
    <property type="entry name" value="Neuropilin_MCO_CoagFactor"/>
</dbReference>
<dbReference type="InterPro" id="IPR035914">
    <property type="entry name" value="Sperma_CUB_dom_sf"/>
</dbReference>
<dbReference type="PANTHER" id="PTHR46806">
    <property type="entry name" value="F5/8 TYPE C DOMAIN-CONTAINING PROTEIN"/>
    <property type="match status" value="1"/>
</dbReference>
<dbReference type="PANTHER" id="PTHR46806:SF2">
    <property type="entry name" value="NEUROPILIN-2"/>
    <property type="match status" value="1"/>
</dbReference>
<dbReference type="Pfam" id="PF00431">
    <property type="entry name" value="CUB"/>
    <property type="match status" value="2"/>
</dbReference>
<dbReference type="Pfam" id="PF11980">
    <property type="entry name" value="DUF3481"/>
    <property type="match status" value="1"/>
</dbReference>
<dbReference type="Pfam" id="PF00754">
    <property type="entry name" value="F5_F8_type_C"/>
    <property type="match status" value="2"/>
</dbReference>
<dbReference type="Pfam" id="PF00629">
    <property type="entry name" value="MAM"/>
    <property type="match status" value="1"/>
</dbReference>
<dbReference type="PIRSF" id="PIRSF036960">
    <property type="entry name" value="Neuropilin"/>
    <property type="match status" value="1"/>
</dbReference>
<dbReference type="PRINTS" id="PR00020">
    <property type="entry name" value="MAMDOMAIN"/>
</dbReference>
<dbReference type="SMART" id="SM00042">
    <property type="entry name" value="CUB"/>
    <property type="match status" value="2"/>
</dbReference>
<dbReference type="SMART" id="SM00231">
    <property type="entry name" value="FA58C"/>
    <property type="match status" value="2"/>
</dbReference>
<dbReference type="SMART" id="SM00137">
    <property type="entry name" value="MAM"/>
    <property type="match status" value="1"/>
</dbReference>
<dbReference type="SUPFAM" id="SSF49899">
    <property type="entry name" value="Concanavalin A-like lectins/glucanases"/>
    <property type="match status" value="1"/>
</dbReference>
<dbReference type="SUPFAM" id="SSF49785">
    <property type="entry name" value="Galactose-binding domain-like"/>
    <property type="match status" value="2"/>
</dbReference>
<dbReference type="SUPFAM" id="SSF49854">
    <property type="entry name" value="Spermadhesin, CUB domain"/>
    <property type="match status" value="2"/>
</dbReference>
<dbReference type="PROSITE" id="PS01180">
    <property type="entry name" value="CUB"/>
    <property type="match status" value="2"/>
</dbReference>
<dbReference type="PROSITE" id="PS01285">
    <property type="entry name" value="FA58C_1"/>
    <property type="match status" value="2"/>
</dbReference>
<dbReference type="PROSITE" id="PS01286">
    <property type="entry name" value="FA58C_2"/>
    <property type="match status" value="2"/>
</dbReference>
<dbReference type="PROSITE" id="PS50022">
    <property type="entry name" value="FA58C_3"/>
    <property type="match status" value="2"/>
</dbReference>
<dbReference type="PROSITE" id="PS50060">
    <property type="entry name" value="MAM_2"/>
    <property type="match status" value="1"/>
</dbReference>
<evidence type="ECO:0000250" key="1"/>
<evidence type="ECO:0000250" key="2">
    <source>
        <dbReference type="UniProtKB" id="O60462"/>
    </source>
</evidence>
<evidence type="ECO:0000255" key="3"/>
<evidence type="ECO:0000255" key="4">
    <source>
        <dbReference type="PROSITE-ProRule" id="PRU00059"/>
    </source>
</evidence>
<evidence type="ECO:0000255" key="5">
    <source>
        <dbReference type="PROSITE-ProRule" id="PRU00081"/>
    </source>
</evidence>
<evidence type="ECO:0000255" key="6">
    <source>
        <dbReference type="PROSITE-ProRule" id="PRU00128"/>
    </source>
</evidence>
<evidence type="ECO:0000256" key="7">
    <source>
        <dbReference type="SAM" id="MobiDB-lite"/>
    </source>
</evidence>
<evidence type="ECO:0000303" key="8">
    <source>
    </source>
</evidence>
<evidence type="ECO:0000305" key="9"/>
<keyword id="KW-0025">Alternative splicing</keyword>
<keyword id="KW-0106">Calcium</keyword>
<keyword id="KW-0217">Developmental protein</keyword>
<keyword id="KW-0221">Differentiation</keyword>
<keyword id="KW-1015">Disulfide bond</keyword>
<keyword id="KW-0325">Glycoprotein</keyword>
<keyword id="KW-0358">Heparin-binding</keyword>
<keyword id="KW-0472">Membrane</keyword>
<keyword id="KW-0479">Metal-binding</keyword>
<keyword id="KW-0524">Neurogenesis</keyword>
<keyword id="KW-0675">Receptor</keyword>
<keyword id="KW-1185">Reference proteome</keyword>
<keyword id="KW-0677">Repeat</keyword>
<keyword id="KW-0732">Signal</keyword>
<keyword id="KW-0812">Transmembrane</keyword>
<keyword id="KW-1133">Transmembrane helix</keyword>
<organism>
    <name type="scientific">Mus musculus</name>
    <name type="common">Mouse</name>
    <dbReference type="NCBI Taxonomy" id="10090"/>
    <lineage>
        <taxon>Eukaryota</taxon>
        <taxon>Metazoa</taxon>
        <taxon>Chordata</taxon>
        <taxon>Craniata</taxon>
        <taxon>Vertebrata</taxon>
        <taxon>Euteleostomi</taxon>
        <taxon>Mammalia</taxon>
        <taxon>Eutheria</taxon>
        <taxon>Euarchontoglires</taxon>
        <taxon>Glires</taxon>
        <taxon>Rodentia</taxon>
        <taxon>Myomorpha</taxon>
        <taxon>Muroidea</taxon>
        <taxon>Muridae</taxon>
        <taxon>Murinae</taxon>
        <taxon>Mus</taxon>
        <taxon>Mus</taxon>
    </lineage>
</organism>
<proteinExistence type="evidence at protein level"/>
<feature type="signal peptide" evidence="3">
    <location>
        <begin position="1"/>
        <end position="20"/>
    </location>
</feature>
<feature type="chain" id="PRO_0000021864" description="Neuropilin-2">
    <location>
        <begin position="21"/>
        <end position="931"/>
    </location>
</feature>
<feature type="topological domain" description="Extracellular" evidence="3">
    <location>
        <begin position="21"/>
        <end position="864"/>
    </location>
</feature>
<feature type="transmembrane region" description="Helical" evidence="3">
    <location>
        <begin position="865"/>
        <end position="889"/>
    </location>
</feature>
<feature type="topological domain" description="Cytoplasmic" evidence="3">
    <location>
        <begin position="890"/>
        <end position="931"/>
    </location>
</feature>
<feature type="domain" description="CUB 1" evidence="4">
    <location>
        <begin position="28"/>
        <end position="142"/>
    </location>
</feature>
<feature type="domain" description="CUB 2" evidence="4">
    <location>
        <begin position="149"/>
        <end position="267"/>
    </location>
</feature>
<feature type="domain" description="F5/8 type C 1" evidence="5">
    <location>
        <begin position="277"/>
        <end position="427"/>
    </location>
</feature>
<feature type="domain" description="F5/8 type C 2" evidence="5">
    <location>
        <begin position="434"/>
        <end position="592"/>
    </location>
</feature>
<feature type="domain" description="MAM" evidence="6">
    <location>
        <begin position="642"/>
        <end position="802"/>
    </location>
</feature>
<feature type="region of interest" description="Disordered" evidence="7">
    <location>
        <begin position="298"/>
        <end position="317"/>
    </location>
</feature>
<feature type="region of interest" description="Disordered" evidence="7">
    <location>
        <begin position="601"/>
        <end position="621"/>
    </location>
</feature>
<feature type="region of interest" description="Disordered" evidence="7">
    <location>
        <begin position="819"/>
        <end position="854"/>
    </location>
</feature>
<feature type="compositionally biased region" description="Polar residues" evidence="7">
    <location>
        <begin position="298"/>
        <end position="310"/>
    </location>
</feature>
<feature type="compositionally biased region" description="Acidic residues" evidence="7">
    <location>
        <begin position="824"/>
        <end position="835"/>
    </location>
</feature>
<feature type="compositionally biased region" description="Low complexity" evidence="7">
    <location>
        <begin position="836"/>
        <end position="851"/>
    </location>
</feature>
<feature type="binding site" evidence="2">
    <location>
        <position position="197"/>
    </location>
    <ligand>
        <name>Ca(2+)</name>
        <dbReference type="ChEBI" id="CHEBI:29108"/>
    </ligand>
</feature>
<feature type="binding site" evidence="2">
    <location>
        <position position="211"/>
    </location>
    <ligand>
        <name>Ca(2+)</name>
        <dbReference type="ChEBI" id="CHEBI:29108"/>
    </ligand>
</feature>
<feature type="binding site" evidence="2">
    <location>
        <position position="252"/>
    </location>
    <ligand>
        <name>Ca(2+)</name>
        <dbReference type="ChEBI" id="CHEBI:29108"/>
    </ligand>
</feature>
<feature type="glycosylation site" description="N-linked (GlcNAc...) asparagine" evidence="3">
    <location>
        <position position="152"/>
    </location>
</feature>
<feature type="glycosylation site" description="N-linked (GlcNAc...) asparagine" evidence="3">
    <location>
        <position position="157"/>
    </location>
</feature>
<feature type="glycosylation site" description="N-linked (GlcNAc...) asparagine" evidence="3">
    <location>
        <position position="629"/>
    </location>
</feature>
<feature type="glycosylation site" description="N-linked (GlcNAc...) asparagine" evidence="3">
    <location>
        <position position="839"/>
    </location>
</feature>
<feature type="disulfide bond" evidence="2">
    <location>
        <begin position="28"/>
        <end position="55"/>
    </location>
</feature>
<feature type="disulfide bond" evidence="2">
    <location>
        <begin position="83"/>
        <end position="105"/>
    </location>
</feature>
<feature type="disulfide bond" evidence="2">
    <location>
        <begin position="149"/>
        <end position="175"/>
    </location>
</feature>
<feature type="disulfide bond" evidence="2">
    <location>
        <begin position="208"/>
        <end position="230"/>
    </location>
</feature>
<feature type="disulfide bond" evidence="2">
    <location>
        <begin position="277"/>
        <end position="427"/>
    </location>
</feature>
<feature type="disulfide bond" evidence="2">
    <location>
        <begin position="434"/>
        <end position="592"/>
    </location>
</feature>
<feature type="splice variant" id="VSP_004344" description="In isoform A0." evidence="8">
    <location>
        <begin position="809"/>
        <end position="830"/>
    </location>
</feature>
<feature type="splice variant" id="VSP_004343" description="In isoform A17." evidence="8">
    <location>
        <begin position="809"/>
        <end position="813"/>
    </location>
</feature>
<feature type="splice variant" id="VSP_004346" description="In isoform B0." evidence="8">
    <original>EDFKVDIPETHGGEGYEDEIDDEYEGDWSNSSSSTSGAGDPSSGKEKSWLYTLDPILITIIAMSSLGVLLGATCAGLLLYCTCSYSGLSSRSCTTLENYNFELYDGLKHKVKINHQKCCSEA</original>
    <variation>GTLPPGTEPTVDTVPVQPIPAYWYYVMAAGGAVLVLASVVLALVLHYHRFRYAAKKTDHSITYKTSHYTNGAPLAVEPTLTIKLEQERGSHC</variation>
    <location>
        <begin position="810"/>
        <end position="931"/>
    </location>
</feature>
<feature type="splice variant" id="VSP_004347" description="In isoform B5." evidence="8">
    <original>VDIPETHGGEGYEDEIDDEYEGDWSNSSSSTSGAGDPSSGKEKSWLYTLDPILITIIAMSSLGVLLGATCAGLLLYCTCSYSGLSSRSCTTLENYNFELYDGLKHKVKINHQKCCSEA</original>
    <variation>GGTLPPGTEPTVDTVPVQPIPAYWYYVMAAGGAVLVLASVVLALVLHYHRFRYAAKKTDHSITYKTSHYTNGAPLAVEPTLTIKLEQERGSHC</variation>
    <location>
        <begin position="814"/>
        <end position="931"/>
    </location>
</feature>
<feature type="splice variant" id="VSP_004345" description="In isoform A5." evidence="8">
    <location>
        <begin position="814"/>
        <end position="830"/>
    </location>
</feature>
<feature type="sequence conflict" description="In Ref. 1; AAC53377/AAC53378/AAC53379/AAC53380/AAC53381/AAC53382." evidence="9" ref="1">
    <original>L</original>
    <variation>P</variation>
    <location>
        <position position="32"/>
    </location>
</feature>
<feature type="sequence conflict" description="In Ref. 1; AAC53377/AAC53378/AAC53382." evidence="9" ref="1">
    <original>I</original>
    <variation>G</variation>
    <location>
        <position position="786"/>
    </location>
</feature>
<reference key="1">
    <citation type="journal article" date="1997" name="Neuron">
        <title>Neuropilin-2, a novel member of the neuropilin family, is a high affinity receptor for the semaphorins Sema E and Sema IV but not Sema III.</title>
        <authorList>
            <person name="Chen H."/>
            <person name="Chedotal A."/>
            <person name="He Z.-G."/>
            <person name="Goodman C.S."/>
            <person name="Tessier-Lavigne M."/>
        </authorList>
    </citation>
    <scope>NUCLEOTIDE SEQUENCE [MRNA] (ISOFORMS A0; A17; A22; A5; B0 AND B5)</scope>
    <source>
        <strain>BALB/cJ</strain>
    </source>
</reference>
<reference key="2">
    <citation type="journal article" date="2009" name="PLoS Biol.">
        <title>Lineage-specific biology revealed by a finished genome assembly of the mouse.</title>
        <authorList>
            <person name="Church D.M."/>
            <person name="Goodstadt L."/>
            <person name="Hillier L.W."/>
            <person name="Zody M.C."/>
            <person name="Goldstein S."/>
            <person name="She X."/>
            <person name="Bult C.J."/>
            <person name="Agarwala R."/>
            <person name="Cherry J.L."/>
            <person name="DiCuccio M."/>
            <person name="Hlavina W."/>
            <person name="Kapustin Y."/>
            <person name="Meric P."/>
            <person name="Maglott D."/>
            <person name="Birtle Z."/>
            <person name="Marques A.C."/>
            <person name="Graves T."/>
            <person name="Zhou S."/>
            <person name="Teague B."/>
            <person name="Potamousis K."/>
            <person name="Churas C."/>
            <person name="Place M."/>
            <person name="Herschleb J."/>
            <person name="Runnheim R."/>
            <person name="Forrest D."/>
            <person name="Amos-Landgraf J."/>
            <person name="Schwartz D.C."/>
            <person name="Cheng Z."/>
            <person name="Lindblad-Toh K."/>
            <person name="Eichler E.E."/>
            <person name="Ponting C.P."/>
        </authorList>
    </citation>
    <scope>NUCLEOTIDE SEQUENCE [LARGE SCALE GENOMIC DNA]</scope>
    <source>
        <strain>C57BL/6J</strain>
    </source>
</reference>
<reference key="3">
    <citation type="journal article" date="2010" name="Cell">
        <title>A tissue-specific atlas of mouse protein phosphorylation and expression.</title>
        <authorList>
            <person name="Huttlin E.L."/>
            <person name="Jedrychowski M.P."/>
            <person name="Elias J.E."/>
            <person name="Goswami T."/>
            <person name="Rad R."/>
            <person name="Beausoleil S.A."/>
            <person name="Villen J."/>
            <person name="Haas W."/>
            <person name="Sowa M.E."/>
            <person name="Gygi S.P."/>
        </authorList>
    </citation>
    <scope>IDENTIFICATION BY MASS SPECTROMETRY [LARGE SCALE ANALYSIS]</scope>
    <source>
        <tissue>Brain</tissue>
        <tissue>Brown adipose tissue</tissue>
        <tissue>Heart</tissue>
        <tissue>Kidney</tissue>
        <tissue>Lung</tissue>
    </source>
</reference>
<sequence>MDMFPLTWVFLALYFSGHEVRSQQDPPCGGRLNSKDAGYITSPGYPQDYPSHQNCEWIVYAPEPNQKIVLNFNPHFEIEKHDCKYDFIEIRDGDSESADLLGKHCGNIAPPTIISSGSVLYIKFTSDYARQGAGFSLRYEIFKTGSEDCSKNFTSPNGTIESPGFPEKYPHNLDCTFTILAKPRMEIILQFLTFDLEHDPLQVGEGDCKYDWLDIWDGIPHVGPLIGKYCGTKTPSKLRSSTGILSLTFHTDMAVAKDGFSARYYLIHQEPPENFQCNVPLGMESGRIANEQISASSTFSDGRWTPQQSRLHGDDNGWTPNLDSNKEYLQVDLRFLTMLTAIATQGAISRETQKGYYVKSYKLEVSTNGEDWMVYRHGKNHKIFQANNDATEVVLNKLHMPLLTRFIRIRPQTWHLGIALRLELFGCRVTDAPCSNMLGMLSGLIADTQISASSTREYLWSPSAARLVSSRSGWFPRNPQAQPGEEWLQVDLGTPKTVKGVIIQGARGGDSITAVEARAFVRKFKVSYSLNGKDWEYIQDPRTQQTKLFEGNMHYDTPDIRRFDPVPAQYVRVYPERWSPAGIGMRLEVLGCDWTDSKPTVETLGPTVKSEETTTPYPMDEDATECGENCSFEDDKDLQLPSGFNCNFDFPEETCGWVYDHAKWLRSTWISSANPNDRTFPDDKNFLKLQSDGRREGQYGRLISPPVHLPRSPVCMEFQYQAMGGHGVALQVVREASQESKLLWVIREDQGSEWKHGRIILPSYDMEYQIVFEGVIGKGRSGEISIDDIRISTDVPLENCMEPISAFAGEDFKVDIPETHGGEGYEDEIDDEYEGDWSNSSSSTSGAGDPSSGKEKSWLYTLDPILITIIAMSSLGVLLGATCAGLLLYCTCSYSGLSSRSCTTLENYNFELYDGLKHKVKINHQKCCSEA</sequence>
<comment type="function">
    <text>High affinity receptor for semaphorins 3C, 3F, VEGF-165 and VEGF-145 isoforms of VEGF, and the PLGF-2 isoform of PGF.</text>
</comment>
<comment type="subunit">
    <text evidence="1">Heterodimer with NRP1. Binds PLXNB1 (By similarity).</text>
</comment>
<comment type="subcellular location">
    <subcellularLocation>
        <location evidence="2">Membrane</location>
        <topology evidence="2">Single-pass type I membrane protein</topology>
    </subcellularLocation>
</comment>
<comment type="alternative products">
    <event type="alternative splicing"/>
    <isoform>
        <id>O35375-1</id>
        <name>A22</name>
        <sequence type="displayed"/>
    </isoform>
    <isoform>
        <id>O35375-2</id>
        <name>A0</name>
        <sequence type="described" ref="VSP_004344"/>
    </isoform>
    <isoform>
        <id>O35375-3</id>
        <name>A5</name>
        <sequence type="described" ref="VSP_004345"/>
    </isoform>
    <isoform>
        <id>O35375-4</id>
        <name>A17</name>
        <sequence type="described" ref="VSP_004343"/>
    </isoform>
    <isoform>
        <id>O35375-5</id>
        <name>B0</name>
        <sequence type="described" ref="VSP_004346"/>
    </isoform>
    <isoform>
        <id>O35375-6</id>
        <name>B5</name>
        <sequence type="described" ref="VSP_004347"/>
    </isoform>
</comment>
<comment type="tissue specificity">
    <text>Expressed in developing CNS, PNS and in some nonneural tissues including limb buds, developing bones, muscles, intestinal epithelium, kidney, lung and submandibular gland.</text>
</comment>
<comment type="developmental stage">
    <text>The expression pattern is very dynamic and is developmentally regulated.</text>
</comment>
<comment type="domain">
    <text evidence="1">The tandem CUB domains mediate binding to semaphorin, while the tandem F5/8 domains are responsible for heparin and VEGF binding.</text>
</comment>
<comment type="similarity">
    <text evidence="9">Belongs to the neuropilin family.</text>
</comment>
<protein>
    <recommendedName>
        <fullName>Neuropilin-2</fullName>
    </recommendedName>
    <alternativeName>
        <fullName>Vascular endothelial cell growth factor 165 receptor 2</fullName>
    </alternativeName>
</protein>